<organism>
    <name type="scientific">Homo sapiens</name>
    <name type="common">Human</name>
    <dbReference type="NCBI Taxonomy" id="9606"/>
    <lineage>
        <taxon>Eukaryota</taxon>
        <taxon>Metazoa</taxon>
        <taxon>Chordata</taxon>
        <taxon>Craniata</taxon>
        <taxon>Vertebrata</taxon>
        <taxon>Euteleostomi</taxon>
        <taxon>Mammalia</taxon>
        <taxon>Eutheria</taxon>
        <taxon>Euarchontoglires</taxon>
        <taxon>Primates</taxon>
        <taxon>Haplorrhini</taxon>
        <taxon>Catarrhini</taxon>
        <taxon>Hominidae</taxon>
        <taxon>Homo</taxon>
    </lineage>
</organism>
<reference key="1">
    <citation type="journal article" date="1983" name="Proc. Natl. Acad. Sci. U.S.A.">
        <title>Complete nucleotide sequence of a human c-onc gene: deduced amino acid sequence of the human c-fos protein.</title>
        <authorList>
            <person name="van Straaten F."/>
            <person name="Mueller R."/>
            <person name="Curran T."/>
            <person name="Van Beveren C."/>
            <person name="Verma I.M."/>
        </authorList>
    </citation>
    <scope>NUCLEOTIDE SEQUENCE [GENOMIC DNA]</scope>
</reference>
<reference key="2">
    <citation type="submission" date="2003-01" db="EMBL/GenBank/DDBJ databases">
        <authorList>
            <consortium name="NIEHS SNPs program"/>
        </authorList>
    </citation>
    <scope>NUCLEOTIDE SEQUENCE [GENOMIC DNA]</scope>
</reference>
<reference key="3">
    <citation type="journal article" date="2004" name="Nat. Genet.">
        <title>Complete sequencing and characterization of 21,243 full-length human cDNAs.</title>
        <authorList>
            <person name="Ota T."/>
            <person name="Suzuki Y."/>
            <person name="Nishikawa T."/>
            <person name="Otsuki T."/>
            <person name="Sugiyama T."/>
            <person name="Irie R."/>
            <person name="Wakamatsu A."/>
            <person name="Hayashi K."/>
            <person name="Sato H."/>
            <person name="Nagai K."/>
            <person name="Kimura K."/>
            <person name="Makita H."/>
            <person name="Sekine M."/>
            <person name="Obayashi M."/>
            <person name="Nishi T."/>
            <person name="Shibahara T."/>
            <person name="Tanaka T."/>
            <person name="Ishii S."/>
            <person name="Yamamoto J."/>
            <person name="Saito K."/>
            <person name="Kawai Y."/>
            <person name="Isono Y."/>
            <person name="Nakamura Y."/>
            <person name="Nagahari K."/>
            <person name="Murakami K."/>
            <person name="Yasuda T."/>
            <person name="Iwayanagi T."/>
            <person name="Wagatsuma M."/>
            <person name="Shiratori A."/>
            <person name="Sudo H."/>
            <person name="Hosoiri T."/>
            <person name="Kaku Y."/>
            <person name="Kodaira H."/>
            <person name="Kondo H."/>
            <person name="Sugawara M."/>
            <person name="Takahashi M."/>
            <person name="Kanda K."/>
            <person name="Yokoi T."/>
            <person name="Furuya T."/>
            <person name="Kikkawa E."/>
            <person name="Omura Y."/>
            <person name="Abe K."/>
            <person name="Kamihara K."/>
            <person name="Katsuta N."/>
            <person name="Sato K."/>
            <person name="Tanikawa M."/>
            <person name="Yamazaki M."/>
            <person name="Ninomiya K."/>
            <person name="Ishibashi T."/>
            <person name="Yamashita H."/>
            <person name="Murakawa K."/>
            <person name="Fujimori K."/>
            <person name="Tanai H."/>
            <person name="Kimata M."/>
            <person name="Watanabe M."/>
            <person name="Hiraoka S."/>
            <person name="Chiba Y."/>
            <person name="Ishida S."/>
            <person name="Ono Y."/>
            <person name="Takiguchi S."/>
            <person name="Watanabe S."/>
            <person name="Yosida M."/>
            <person name="Hotuta T."/>
            <person name="Kusano J."/>
            <person name="Kanehori K."/>
            <person name="Takahashi-Fujii A."/>
            <person name="Hara H."/>
            <person name="Tanase T.-O."/>
            <person name="Nomura Y."/>
            <person name="Togiya S."/>
            <person name="Komai F."/>
            <person name="Hara R."/>
            <person name="Takeuchi K."/>
            <person name="Arita M."/>
            <person name="Imose N."/>
            <person name="Musashino K."/>
            <person name="Yuuki H."/>
            <person name="Oshima A."/>
            <person name="Sasaki N."/>
            <person name="Aotsuka S."/>
            <person name="Yoshikawa Y."/>
            <person name="Matsunawa H."/>
            <person name="Ichihara T."/>
            <person name="Shiohata N."/>
            <person name="Sano S."/>
            <person name="Moriya S."/>
            <person name="Momiyama H."/>
            <person name="Satoh N."/>
            <person name="Takami S."/>
            <person name="Terashima Y."/>
            <person name="Suzuki O."/>
            <person name="Nakagawa S."/>
            <person name="Senoh A."/>
            <person name="Mizoguchi H."/>
            <person name="Goto Y."/>
            <person name="Shimizu F."/>
            <person name="Wakebe H."/>
            <person name="Hishigaki H."/>
            <person name="Watanabe T."/>
            <person name="Sugiyama A."/>
            <person name="Takemoto M."/>
            <person name="Kawakami B."/>
            <person name="Yamazaki M."/>
            <person name="Watanabe K."/>
            <person name="Kumagai A."/>
            <person name="Itakura S."/>
            <person name="Fukuzumi Y."/>
            <person name="Fujimori Y."/>
            <person name="Komiyama M."/>
            <person name="Tashiro H."/>
            <person name="Tanigami A."/>
            <person name="Fujiwara T."/>
            <person name="Ono T."/>
            <person name="Yamada K."/>
            <person name="Fujii Y."/>
            <person name="Ozaki K."/>
            <person name="Hirao M."/>
            <person name="Ohmori Y."/>
            <person name="Kawabata A."/>
            <person name="Hikiji T."/>
            <person name="Kobatake N."/>
            <person name="Inagaki H."/>
            <person name="Ikema Y."/>
            <person name="Okamoto S."/>
            <person name="Okitani R."/>
            <person name="Kawakami T."/>
            <person name="Noguchi S."/>
            <person name="Itoh T."/>
            <person name="Shigeta K."/>
            <person name="Senba T."/>
            <person name="Matsumura K."/>
            <person name="Nakajima Y."/>
            <person name="Mizuno T."/>
            <person name="Morinaga M."/>
            <person name="Sasaki M."/>
            <person name="Togashi T."/>
            <person name="Oyama M."/>
            <person name="Hata H."/>
            <person name="Watanabe M."/>
            <person name="Komatsu T."/>
            <person name="Mizushima-Sugano J."/>
            <person name="Satoh T."/>
            <person name="Shirai Y."/>
            <person name="Takahashi Y."/>
            <person name="Nakagawa K."/>
            <person name="Okumura K."/>
            <person name="Nagase T."/>
            <person name="Nomura N."/>
            <person name="Kikuchi H."/>
            <person name="Masuho Y."/>
            <person name="Yamashita R."/>
            <person name="Nakai K."/>
            <person name="Yada T."/>
            <person name="Nakamura Y."/>
            <person name="Ohara O."/>
            <person name="Isogai T."/>
            <person name="Sugano S."/>
        </authorList>
    </citation>
    <scope>NUCLEOTIDE SEQUENCE [LARGE SCALE MRNA] (ISOFORMS 2 AND 3)</scope>
    <source>
        <tissue>Colon</tissue>
    </source>
</reference>
<reference key="4">
    <citation type="journal article" date="2003" name="Nature">
        <title>The DNA sequence and analysis of human chromosome 14.</title>
        <authorList>
            <person name="Heilig R."/>
            <person name="Eckenberg R."/>
            <person name="Petit J.-L."/>
            <person name="Fonknechten N."/>
            <person name="Da Silva C."/>
            <person name="Cattolico L."/>
            <person name="Levy M."/>
            <person name="Barbe V."/>
            <person name="De Berardinis V."/>
            <person name="Ureta-Vidal A."/>
            <person name="Pelletier E."/>
            <person name="Vico V."/>
            <person name="Anthouard V."/>
            <person name="Rowen L."/>
            <person name="Madan A."/>
            <person name="Qin S."/>
            <person name="Sun H."/>
            <person name="Du H."/>
            <person name="Pepin K."/>
            <person name="Artiguenave F."/>
            <person name="Robert C."/>
            <person name="Cruaud C."/>
            <person name="Bruels T."/>
            <person name="Jaillon O."/>
            <person name="Friedlander L."/>
            <person name="Samson G."/>
            <person name="Brottier P."/>
            <person name="Cure S."/>
            <person name="Segurens B."/>
            <person name="Aniere F."/>
            <person name="Samain S."/>
            <person name="Crespeau H."/>
            <person name="Abbasi N."/>
            <person name="Aiach N."/>
            <person name="Boscus D."/>
            <person name="Dickhoff R."/>
            <person name="Dors M."/>
            <person name="Dubois I."/>
            <person name="Friedman C."/>
            <person name="Gouyvenoux M."/>
            <person name="James R."/>
            <person name="Madan A."/>
            <person name="Mairey-Estrada B."/>
            <person name="Mangenot S."/>
            <person name="Martins N."/>
            <person name="Menard M."/>
            <person name="Oztas S."/>
            <person name="Ratcliffe A."/>
            <person name="Shaffer T."/>
            <person name="Trask B."/>
            <person name="Vacherie B."/>
            <person name="Bellemere C."/>
            <person name="Belser C."/>
            <person name="Besnard-Gonnet M."/>
            <person name="Bartol-Mavel D."/>
            <person name="Boutard M."/>
            <person name="Briez-Silla S."/>
            <person name="Combette S."/>
            <person name="Dufosse-Laurent V."/>
            <person name="Ferron C."/>
            <person name="Lechaplais C."/>
            <person name="Louesse C."/>
            <person name="Muselet D."/>
            <person name="Magdelenat G."/>
            <person name="Pateau E."/>
            <person name="Petit E."/>
            <person name="Sirvain-Trukniewicz P."/>
            <person name="Trybou A."/>
            <person name="Vega-Czarny N."/>
            <person name="Bataille E."/>
            <person name="Bluet E."/>
            <person name="Bordelais I."/>
            <person name="Dubois M."/>
            <person name="Dumont C."/>
            <person name="Guerin T."/>
            <person name="Haffray S."/>
            <person name="Hammadi R."/>
            <person name="Muanga J."/>
            <person name="Pellouin V."/>
            <person name="Robert D."/>
            <person name="Wunderle E."/>
            <person name="Gauguet G."/>
            <person name="Roy A."/>
            <person name="Sainte-Marthe L."/>
            <person name="Verdier J."/>
            <person name="Verdier-Discala C."/>
            <person name="Hillier L.W."/>
            <person name="Fulton L."/>
            <person name="McPherson J."/>
            <person name="Matsuda F."/>
            <person name="Wilson R."/>
            <person name="Scarpelli C."/>
            <person name="Gyapay G."/>
            <person name="Wincker P."/>
            <person name="Saurin W."/>
            <person name="Quetier F."/>
            <person name="Waterston R."/>
            <person name="Hood L."/>
            <person name="Weissenbach J."/>
        </authorList>
    </citation>
    <scope>NUCLEOTIDE SEQUENCE [LARGE SCALE GENOMIC DNA]</scope>
</reference>
<reference key="5">
    <citation type="submission" date="2005-07" db="EMBL/GenBank/DDBJ databases">
        <authorList>
            <person name="Mural R.J."/>
            <person name="Istrail S."/>
            <person name="Sutton G."/>
            <person name="Florea L."/>
            <person name="Halpern A.L."/>
            <person name="Mobarry C.M."/>
            <person name="Lippert R."/>
            <person name="Walenz B."/>
            <person name="Shatkay H."/>
            <person name="Dew I."/>
            <person name="Miller J.R."/>
            <person name="Flanigan M.J."/>
            <person name="Edwards N.J."/>
            <person name="Bolanos R."/>
            <person name="Fasulo D."/>
            <person name="Halldorsson B.V."/>
            <person name="Hannenhalli S."/>
            <person name="Turner R."/>
            <person name="Yooseph S."/>
            <person name="Lu F."/>
            <person name="Nusskern D.R."/>
            <person name="Shue B.C."/>
            <person name="Zheng X.H."/>
            <person name="Zhong F."/>
            <person name="Delcher A.L."/>
            <person name="Huson D.H."/>
            <person name="Kravitz S.A."/>
            <person name="Mouchard L."/>
            <person name="Reinert K."/>
            <person name="Remington K.A."/>
            <person name="Clark A.G."/>
            <person name="Waterman M.S."/>
            <person name="Eichler E.E."/>
            <person name="Adams M.D."/>
            <person name="Hunkapiller M.W."/>
            <person name="Myers E.W."/>
            <person name="Venter J.C."/>
        </authorList>
    </citation>
    <scope>NUCLEOTIDE SEQUENCE [LARGE SCALE GENOMIC DNA]</scope>
</reference>
<reference key="6">
    <citation type="journal article" date="2004" name="Genome Res.">
        <title>The status, quality, and expansion of the NIH full-length cDNA project: the Mammalian Gene Collection (MGC).</title>
        <authorList>
            <consortium name="The MGC Project Team"/>
        </authorList>
    </citation>
    <scope>NUCLEOTIDE SEQUENCE [LARGE SCALE MRNA] (ISOFORM 1)</scope>
    <source>
        <tissue>Pancreas</tissue>
    </source>
</reference>
<reference key="7">
    <citation type="journal article" date="1991" name="Oncogene">
        <title>Retrovirus-mediated gene transfer of a human c-fos cDNA into mouse bone marrow stromal cells.</title>
        <authorList>
            <person name="Roux P."/>
            <person name="Verrier B."/>
            <person name="Klein B."/>
            <person name="Niccolino M."/>
            <person name="Marty L."/>
            <person name="Alexandre C."/>
            <person name="Piechaczyk M."/>
        </authorList>
    </citation>
    <scope>NUCLEOTIDE SEQUENCE [MRNA] OF 1-6 (ISOFORM 1/2)</scope>
</reference>
<reference key="8">
    <citation type="journal article" date="1989" name="Genes Dev.">
        <title>Transcription factor ATF cDNA clones: an extensive family of leucine zipper proteins able to selectively form DNA-binding heterodimers.</title>
        <authorList>
            <person name="Hai T."/>
            <person name="Liu F."/>
            <person name="Coukos W.J."/>
            <person name="Green M.R."/>
        </authorList>
    </citation>
    <scope>NUCLEOTIDE SEQUENCE [MRNA] OF 133-200 (ISOFORM 1)</scope>
    <scope>DNA-BINDING</scope>
    <scope>SUBUNIT</scope>
</reference>
<reference key="9">
    <citation type="journal article" date="1990" name="Genes Dev.">
        <authorList>
            <person name="Hai T."/>
            <person name="Liu F."/>
            <person name="Coukos W.J."/>
            <person name="Green M.R."/>
        </authorList>
    </citation>
    <scope>ERRATUM OF PUBMED:2516827</scope>
</reference>
<reference key="10">
    <citation type="journal article" date="1989" name="EMBO J.">
        <title>The basic region of Fos mediates specific DNA binding.</title>
        <authorList>
            <person name="Nakabeppu Y."/>
            <person name="Nathans D."/>
        </authorList>
    </citation>
    <scope>DNA-BINDING</scope>
</reference>
<reference key="11">
    <citation type="journal article" date="1995" name="EMBO J.">
        <title>The Mos/MAP kinase pathway stabilizes c-Fos by phosphorylation and augments its transforming activity in NIH 3T3 cells.</title>
        <authorList>
            <person name="Okazaki K."/>
            <person name="Sagata N."/>
        </authorList>
    </citation>
    <scope>PHOSPHORYLATION AT SER-362 AND SER-374</scope>
    <scope>FUNCTION</scope>
    <scope>MUTAGENESIS OF SER-362 AND SER-374</scope>
</reference>
<reference key="12">
    <citation type="journal article" date="1998" name="Nature">
        <title>Smad3 and Smad4 cooperate with c-Jun/c-Fos to mediate TGF-beta-induced transcription.</title>
        <authorList>
            <person name="Zhang Y."/>
            <person name="Feng X.H."/>
            <person name="Derynck R."/>
        </authorList>
    </citation>
    <scope>IDENTIFICATION AS A COMPONENT OF THE SMAD3/SMAD4/JUN/FOS COMPLEX</scope>
    <scope>FUNCTION</scope>
    <scope>INTERACTION WITH SMAD3</scope>
</reference>
<reference key="13">
    <citation type="journal article" date="2002" name="Nat. Cell Biol.">
        <title>Molecular interpretation of ERK signal duration by immediate early gene products.</title>
        <authorList>
            <person name="Murphy L.O."/>
            <person name="Smith S."/>
            <person name="Chen R.H."/>
            <person name="Fingar D.C."/>
            <person name="Blenis J."/>
        </authorList>
    </citation>
    <scope>PHOSPHORYLATION AT THR-325; THR-331 AND SER-374</scope>
</reference>
<reference key="14">
    <citation type="journal article" date="2005" name="Mol. Cell. Biol.">
        <title>Down-regulation of c-Fos/c-Jun AP-1 dimer activity by sumoylation.</title>
        <authorList>
            <person name="Bossis G."/>
            <person name="Malnou C.E."/>
            <person name="Farras R."/>
            <person name="Andermarcher E."/>
            <person name="Hipskind R."/>
            <person name="Rodriguez M."/>
            <person name="Schmidt D."/>
            <person name="Muller S."/>
            <person name="Jariel-Encontre I."/>
            <person name="Piechaczyk M."/>
        </authorList>
    </citation>
    <scope>SUMOYLATION AT LYS-265</scope>
    <scope>SUBCELLULAR LOCATION</scope>
    <scope>FUNCTION</scope>
    <scope>MUTAGENESIS OF LYS-128; LYS-192; THR-232; LYS-265; THR-325; THR-331; SER-362 AND SER-374</scope>
</reference>
<reference key="15">
    <citation type="journal article" date="2007" name="Nucleic Acids Res.">
        <title>Ubc9 fusion-directed SUMOylation identifies constitutive and inducible SUMOylation.</title>
        <authorList>
            <person name="Jakobs A."/>
            <person name="Himstedt F."/>
            <person name="Funk M."/>
            <person name="Korn B."/>
            <person name="Gaestel M."/>
            <person name="Niedenthal R."/>
        </authorList>
    </citation>
    <scope>SUMOYLATION</scope>
</reference>
<reference key="16">
    <citation type="journal article" date="2007" name="Oncogene">
        <title>N-Terminal c-Fos tyrosine phosphorylation regulates c-Fos/ER association and c-Fos-dependent phospholipid synthesis activation.</title>
        <authorList>
            <person name="Portal M.M."/>
            <person name="Ferrero G.O."/>
            <person name="Caputto B.L."/>
        </authorList>
    </citation>
    <scope>FUNCTION</scope>
    <scope>SUBCELLULAR LOCATION</scope>
    <scope>DEVELOPMENTAL STAGE</scope>
    <scope>PHOSPHORYLATION AT TYR-10 AND TYR-30</scope>
    <scope>MUTAGENESIS OF TYR-10; TYR-30; TYR-106 AND TYR-337</scope>
</reference>
<reference key="17">
    <citation type="journal article" date="2009" name="Sci. Signal.">
        <title>Quantitative phosphoproteomic analysis of T cell receptor signaling reveals system-wide modulation of protein-protein interactions.</title>
        <authorList>
            <person name="Mayya V."/>
            <person name="Lundgren D.H."/>
            <person name="Hwang S.-I."/>
            <person name="Rezaul K."/>
            <person name="Wu L."/>
            <person name="Eng J.K."/>
            <person name="Rodionov V."/>
            <person name="Han D.K."/>
        </authorList>
    </citation>
    <scope>IDENTIFICATION BY MASS SPECTROMETRY [LARGE SCALE ANALYSIS]</scope>
    <source>
        <tissue>Leukemic T-cell</tissue>
    </source>
</reference>
<reference key="18">
    <citation type="journal article" date="2012" name="Oncogene">
        <title>The kinase c-Src and the phosphatase TC45 coordinately regulate c-Fos tyrosine phosphorylation and c-Fos phospholipid synthesis activation capacity.</title>
        <authorList>
            <person name="Ferrero G.O."/>
            <person name="Velazquez F.N."/>
            <person name="Caputto B.L."/>
        </authorList>
    </citation>
    <scope>FUNCTION</scope>
    <scope>SUBCELLULAR LOCATION</scope>
    <scope>PHOSPHORYLATION AT TYR-10 AND TYR-30</scope>
    <scope>MUTAGENESIS OF TYR-10 AND TYR-30</scope>
</reference>
<reference key="19">
    <citation type="journal article" date="2014" name="Nat. Struct. Mol. Biol.">
        <title>Uncovering global SUMOylation signaling networks in a site-specific manner.</title>
        <authorList>
            <person name="Hendriks I.A."/>
            <person name="D'Souza R.C."/>
            <person name="Yang B."/>
            <person name="Verlaan-de Vries M."/>
            <person name="Mann M."/>
            <person name="Vertegaal A.C."/>
        </authorList>
    </citation>
    <scope>SUMOYLATION [LARGE SCALE ANALYSIS] AT LYS-128 AND LYS-265</scope>
    <scope>IDENTIFICATION BY MASS SPECTROMETRY [LARGE SCALE ANALYSIS]</scope>
</reference>
<reference key="20">
    <citation type="journal article" date="2015" name="Cell Rep.">
        <title>SUMO-2 orchestrates chromatin modifiers in response to DNA damage.</title>
        <authorList>
            <person name="Hendriks I.A."/>
            <person name="Treffers L.W."/>
            <person name="Verlaan-de Vries M."/>
            <person name="Olsen J.V."/>
            <person name="Vertegaal A.C."/>
        </authorList>
    </citation>
    <scope>SUMOYLATION [LARGE SCALE ANALYSIS] AT LYS-265</scope>
    <scope>IDENTIFICATION BY MASS SPECTROMETRY [LARGE SCALE ANALYSIS]</scope>
</reference>
<reference key="21">
    <citation type="journal article" date="2017" name="Nat. Struct. Mol. Biol.">
        <title>Site-specific mapping of the human SUMO proteome reveals co-modification with phosphorylation.</title>
        <authorList>
            <person name="Hendriks I.A."/>
            <person name="Lyon D."/>
            <person name="Young C."/>
            <person name="Jensen L.J."/>
            <person name="Vertegaal A.C."/>
            <person name="Nielsen M.L."/>
        </authorList>
    </citation>
    <scope>SUMOYLATION [LARGE SCALE ANALYSIS] AT LYS-113; LYS-128 AND LYS-265</scope>
    <scope>IDENTIFICATION BY MASS SPECTROMETRY [LARGE SCALE ANALYSIS]</scope>
</reference>
<reference key="22">
    <citation type="journal article" date="1995" name="Nature">
        <title>Crystal structure of the heterodimeric bZIP transcription factor c-Fos-c-Jun bound to DNA.</title>
        <authorList>
            <person name="Glover J.N."/>
            <person name="Harrison S.C."/>
        </authorList>
    </citation>
    <scope>X-RAY CRYSTALLOGRAPHY (3.05 ANGSTROMS) OF 139-198 OF COMPLEX WITH JUN</scope>
</reference>
<gene>
    <name type="primary">FOS</name>
    <name type="synonym">G0S7</name>
</gene>
<sequence>MMFSGFNADYEASSSRCSSASPAGDSLSYYHSPADSFSSMGSPVNAQDFCTDLAVSSANFIPTVTAISTSPDLQWLVQPALVSSVAPSQTRAPHPFGVPAPSAGAYSRAGVVKTMTGGRAQSIGRRGKVEQLSPEEEEKRRIRRERNKMAAAKCRNRRRELTDTLQAETDQLEDEKSALQTEIANLLKEKEKLEFILAAHRPACKIPDDLGFPEEMSVASLDLTGGLPEVATPESEEAFTLPLLNDPEPKPSVEPVKSISSMELKTEPFDDFLFPASSRPSGSETARSVPDMDLSGSFYAADWEPLHSGSLGMGPMATELEPLCTPVVTCTPSCTAYTSSFVFTYPEADSFPSCAAAHRKGSSSNEPSSDSLSSPTLLAL</sequence>
<proteinExistence type="evidence at protein level"/>
<feature type="chain" id="PRO_0000076465" description="Protein c-Fos">
    <location>
        <begin position="1"/>
        <end position="380"/>
    </location>
</feature>
<feature type="domain" description="bZIP" evidence="4">
    <location>
        <begin position="137"/>
        <end position="200"/>
    </location>
</feature>
<feature type="region of interest" description="Disordered" evidence="5">
    <location>
        <begin position="119"/>
        <end position="138"/>
    </location>
</feature>
<feature type="region of interest" description="Basic motif; required for the activation of phospholipid synthesis, but not for CDS1-binding">
    <location>
        <begin position="139"/>
        <end position="159"/>
    </location>
</feature>
<feature type="region of interest" description="Leucine-zipper" evidence="4">
    <location>
        <begin position="165"/>
        <end position="193"/>
    </location>
</feature>
<feature type="region of interest" description="Disordered" evidence="5">
    <location>
        <begin position="354"/>
        <end position="380"/>
    </location>
</feature>
<feature type="compositionally biased region" description="Low complexity" evidence="5">
    <location>
        <begin position="362"/>
        <end position="374"/>
    </location>
</feature>
<feature type="modified residue" description="Phosphotyrosine; by SRC" evidence="8 10">
    <location>
        <position position="10"/>
    </location>
</feature>
<feature type="modified residue" description="Phosphotyrosine; by SRC" evidence="8 10">
    <location>
        <position position="30"/>
    </location>
</feature>
<feature type="modified residue" description="Phosphothreonine" evidence="2">
    <location>
        <position position="232"/>
    </location>
</feature>
<feature type="modified residue" description="Phosphothreonine; by MAPK1 and MAPK3" evidence="6">
    <location>
        <position position="325"/>
    </location>
</feature>
<feature type="modified residue" description="Phosphothreonine; by MAPK1 and MAPK3" evidence="6">
    <location>
        <position position="331"/>
    </location>
</feature>
<feature type="modified residue" description="Phosphoserine; by MAPK1, MAPK3 and RPS6KA3" evidence="11">
    <location>
        <position position="362"/>
    </location>
</feature>
<feature type="modified residue" description="Phosphoserine; by MAPK1 and MAPK3" evidence="6 11">
    <location>
        <position position="374"/>
    </location>
</feature>
<feature type="cross-link" description="Glycyl lysine isopeptide (Lys-Gly) (interchain with G-Cter in SUMO2)" evidence="18">
    <location>
        <position position="113"/>
    </location>
</feature>
<feature type="cross-link" description="Glycyl lysine isopeptide (Lys-Gly) (interchain with G-Cter in SUMO2)" evidence="16 18">
    <location>
        <position position="128"/>
    </location>
</feature>
<feature type="cross-link" description="Glycyl lysine isopeptide (Lys-Gly) (interchain with G-Cter in SUMO2)" evidence="16 17 18">
    <location>
        <position position="265"/>
    </location>
</feature>
<feature type="splice variant" id="VSP_055560" description="In isoform 2." evidence="13">
    <location>
        <begin position="1"/>
        <end position="114"/>
    </location>
</feature>
<feature type="splice variant" id="VSP_055561" description="In isoform 3." evidence="13">
    <location>
        <begin position="132"/>
        <end position="167"/>
    </location>
</feature>
<feature type="mutagenesis site" description="Loss of activation of phospholipid synthesis; when associated with E-30." evidence="8 10">
    <original>Y</original>
    <variation>E</variation>
    <location>
        <position position="10"/>
    </location>
</feature>
<feature type="mutagenesis site" description="Overall loss of Tyr-phosphorylation, including that of Y-30 phosphorylation. Localizes to the endoplasmic reticulum in quiescent cells. Activates phospholipid synthesis in growing cells." evidence="8 10">
    <original>Y</original>
    <variation>F</variation>
    <location>
        <position position="10"/>
    </location>
</feature>
<feature type="mutagenesis site" description="Loss of activation of phospholipid synthesis; when associated with E-10." evidence="8 10">
    <original>Y</original>
    <variation>E</variation>
    <location>
        <position position="30"/>
    </location>
</feature>
<feature type="mutagenesis site" description="Overall loss of Tyr-phosphorylation, including that of Y-10 phosphorylation. Localizes to the endoplasmic reticulum in quiescent cells. Activates phospholipid synthesis in growing cells." evidence="8 10">
    <original>Y</original>
    <variation>F</variation>
    <location>
        <position position="30"/>
    </location>
</feature>
<feature type="mutagenesis site" description="No effect on Tyr-phosphorylation. Loss of endoplasmic reticulum localization in quiescent cells." evidence="8">
    <original>Y</original>
    <variation>F</variation>
    <location>
        <position position="106"/>
    </location>
</feature>
<feature type="mutagenesis site" description="No change in sumoylation." evidence="7">
    <original>K</original>
    <variation>R</variation>
    <location>
        <position position="128"/>
    </location>
</feature>
<feature type="mutagenesis site" description="No change in sumoylation." evidence="7">
    <original>K</original>
    <variation>R</variation>
    <location>
        <position position="192"/>
    </location>
</feature>
<feature type="mutagenesis site" description="Decreased sumoylation levels." evidence="7">
    <original>T</original>
    <variation>D</variation>
    <location>
        <position position="232"/>
    </location>
</feature>
<feature type="mutagenesis site" description="Abolishes sumoylation. No change in nuclear location nor on protein stability. Increased AP1 transactivation activity when heterodimerized with cJUN." evidence="7">
    <original>K</original>
    <variation>R</variation>
    <location>
        <position position="265"/>
    </location>
</feature>
<feature type="mutagenesis site" description="No change in sumoylation levels." evidence="7">
    <original>T</original>
    <variation>D</variation>
    <location>
        <position position="325"/>
    </location>
</feature>
<feature type="mutagenesis site" description="No change in sumoylation levels." evidence="7">
    <original>T</original>
    <variation>D</variation>
    <location>
        <position position="331"/>
    </location>
</feature>
<feature type="mutagenesis site" description="No effect on Tyr-phosphorylation. Loss of endoplasmic reticulum localization in quiescent cells." evidence="8">
    <original>Y</original>
    <variation>F</variation>
    <location>
        <position position="337"/>
    </location>
</feature>
<feature type="mutagenesis site" description="Loss of protein stability. Reduced MOS/MAPK-mediated transforming ability; when associated with A-374." evidence="7 11">
    <original>S</original>
    <variation>A</variation>
    <location>
        <position position="362"/>
    </location>
</feature>
<feature type="mutagenesis site" description="Increased protein stability. Increased MOS/MAPK-mediated transforming ability and no change in sumoylation levels; when associated with D-374." evidence="7 11">
    <original>S</original>
    <variation>D</variation>
    <location>
        <position position="362"/>
    </location>
</feature>
<feature type="mutagenesis site" description="No change in sumoylation levels. Loss of protein stability. Reduced MOS/MAPK-mediated transforming ability; when associated with A-362." evidence="7 11">
    <original>S</original>
    <variation>A</variation>
    <location>
        <position position="374"/>
    </location>
</feature>
<feature type="mutagenesis site" description="Increased protein stability. Increased MOS/MAPK-mediated transforming ability and no change in sumoylation levels; when associated with D-362." evidence="7 11">
    <original>S</original>
    <variation>D</variation>
    <location>
        <position position="374"/>
    </location>
</feature>
<feature type="sequence conflict" description="In Ref. 6; no nucleotide entry." evidence="14" ref="6">
    <original>SPEEEEKRRIRR</original>
    <variation>ISRRRREKENPK</variation>
    <location>
        <begin position="133"/>
        <end position="144"/>
    </location>
</feature>
<feature type="helix" evidence="19">
    <location>
        <begin position="141"/>
        <end position="191"/>
    </location>
</feature>
<accession>P01100</accession>
<accession>A8K4E2</accession>
<accession>B4DQ65</accession>
<accession>P18849</accession>
<comment type="function">
    <text evidence="7 8 10 11 12">Nuclear phosphoprotein which forms a tight but non-covalently linked complex with the JUN/AP-1 transcription factor. In the heterodimer, FOS and JUN/AP-1 basic regions each seems to interact with symmetrical DNA half sites. On TGF-beta activation, forms a multimeric SMAD3/SMAD4/JUN/FOS complex at the AP1/SMAD-binding site to regulate TGF-beta-mediated signaling. Has a critical function in regulating the development of cells destined to form and maintain the skeleton. It is thought to have an important role in signal transduction, cell proliferation and differentiation. In growing cells, activates phospholipid synthesis, possibly by activating CDS1 and PI4K2A. This activity requires Tyr-dephosphorylation and association with the endoplasmic reticulum.</text>
</comment>
<comment type="subunit">
    <text evidence="2 3 12">Heterodimer; with JUN (By similarity). Component of the SMAD3/SMAD4/JUN/FOS complex required for synergistic TGF-beta-mediated transcription at the AP1 promoter site (PubMed:9732876). Interacts with SMAD3; the interaction is weak even on TGF-beta activation (PubMed:9732876). Interacts with MAFB (By similarity). Interacts with TSC22D3 (via N-terminus); this interaction inhibits the binding of active AP1 to its target DNA (By similarity). Interacts with CDS1 and PI4K2A (By similarity). Interacts (via bZIP domain and leucine-zipper region) with the multiprotein chromatin-remodeling complexes SWI/SNF: SWI/SNF-A (BAF) subunits SMARCB1, SMARCC2 and SMARCD1 (By similarity). Interacts (via bZIP domain and leucine-zipper region) with ARID1A (By similarity).</text>
</comment>
<comment type="interaction">
    <interactant intactId="EBI-852851">
        <id>P01100</id>
    </interactant>
    <interactant intactId="EBI-10173507">
        <id>Q6UY14-3</id>
        <label>ADAMTSL4</label>
    </interactant>
    <organismsDiffer>false</organismsDiffer>
    <experiments>3</experiments>
</comment>
<comment type="interaction">
    <interactant intactId="EBI-852851">
        <id>P01100</id>
    </interactant>
    <interactant intactId="EBI-77613">
        <id>P05067</id>
        <label>APP</label>
    </interactant>
    <organismsDiffer>false</organismsDiffer>
    <experiments>3</experiments>
</comment>
<comment type="interaction">
    <interactant intactId="EBI-852851">
        <id>P01100</id>
    </interactant>
    <interactant intactId="EBI-2806617">
        <id>P52566</id>
        <label>ARHGDIB</label>
    </interactant>
    <organismsDiffer>false</organismsDiffer>
    <experiments>3</experiments>
</comment>
<comment type="interaction">
    <interactant intactId="EBI-852851">
        <id>P01100</id>
    </interactant>
    <interactant intactId="EBI-10254793">
        <id>Q6XD76</id>
        <label>ASCL4</label>
    </interactant>
    <organismsDiffer>false</organismsDiffer>
    <experiments>3</experiments>
</comment>
<comment type="interaction">
    <interactant intactId="EBI-852851">
        <id>P01100</id>
    </interactant>
    <interactant intactId="EBI-1170906">
        <id>P15336</id>
        <label>ATF2</label>
    </interactant>
    <organismsDiffer>false</organismsDiffer>
    <experiments>15</experiments>
</comment>
<comment type="interaction">
    <interactant intactId="EBI-852851">
        <id>P01100</id>
    </interactant>
    <interactant intactId="EBI-712767">
        <id>P18847</id>
        <label>ATF3</label>
    </interactant>
    <organismsDiffer>false</organismsDiffer>
    <experiments>2</experiments>
</comment>
<comment type="interaction">
    <interactant intactId="EBI-852851">
        <id>P01100</id>
    </interactant>
    <interactant intactId="EBI-492498">
        <id>P18848</id>
        <label>ATF4</label>
    </interactant>
    <organismsDiffer>false</organismsDiffer>
    <experiments>4</experiments>
</comment>
<comment type="interaction">
    <interactant intactId="EBI-852851">
        <id>P01100</id>
    </interactant>
    <interactant intactId="EBI-765623">
        <id>P17544</id>
        <label>ATF7</label>
    </interactant>
    <organismsDiffer>false</organismsDiffer>
    <experiments>5</experiments>
</comment>
<comment type="interaction">
    <interactant intactId="EBI-852851">
        <id>P01100</id>
    </interactant>
    <interactant intactId="EBI-949378">
        <id>Q14457</id>
        <label>BECN1</label>
    </interactant>
    <organismsDiffer>false</organismsDiffer>
    <experiments>3</experiments>
</comment>
<comment type="interaction">
    <interactant intactId="EBI-852851">
        <id>P01100</id>
    </interactant>
    <interactant intactId="EBI-741214">
        <id>Q9UFG5</id>
        <label>C19orf25</label>
    </interactant>
    <organismsDiffer>false</organismsDiffer>
    <experiments>3</experiments>
</comment>
<comment type="interaction">
    <interactant intactId="EBI-852851">
        <id>P01100</id>
    </interactant>
    <interactant intactId="EBI-744556">
        <id>Q96HB5</id>
        <label>CCDC120</label>
    </interactant>
    <organismsDiffer>false</organismsDiffer>
    <experiments>3</experiments>
</comment>
<comment type="interaction">
    <interactant intactId="EBI-852851">
        <id>P01100</id>
    </interactant>
    <interactant intactId="EBI-1172054">
        <id>P49715</id>
        <label>CEBPA</label>
    </interactant>
    <organismsDiffer>false</organismsDiffer>
    <experiments>2</experiments>
</comment>
<comment type="interaction">
    <interactant intactId="EBI-852851">
        <id>P01100</id>
    </interactant>
    <interactant intactId="EBI-740209">
        <id>P53567</id>
        <label>CEBPG</label>
    </interactant>
    <organismsDiffer>false</organismsDiffer>
    <experiments>2</experiments>
</comment>
<comment type="interaction">
    <interactant intactId="EBI-852851">
        <id>P01100</id>
    </interactant>
    <interactant intactId="EBI-1104674">
        <id>P10909</id>
        <label>CLU</label>
    </interactant>
    <organismsDiffer>false</organismsDiffer>
    <experiments>2</experiments>
</comment>
<comment type="interaction">
    <interactant intactId="EBI-852851">
        <id>P01100</id>
    </interactant>
    <interactant intactId="EBI-1550310">
        <id>Q9Y6G5</id>
        <label>COMMD10</label>
    </interactant>
    <organismsDiffer>false</organismsDiffer>
    <experiments>3</experiments>
</comment>
<comment type="interaction">
    <interactant intactId="EBI-852851">
        <id>P01100</id>
    </interactant>
    <interactant intactId="EBI-742413">
        <id>Q9BT78</id>
        <label>COPS4</label>
    </interactant>
    <organismsDiffer>false</organismsDiffer>
    <experiments>2</experiments>
</comment>
<comment type="interaction">
    <interactant intactId="EBI-852851">
        <id>P01100</id>
    </interactant>
    <interactant intactId="EBI-10192698">
        <id>Q02930-3</id>
        <label>CREB5</label>
    </interactant>
    <organismsDiffer>false</organismsDiffer>
    <experiments>3</experiments>
</comment>
<comment type="interaction">
    <interactant intactId="EBI-852851">
        <id>P01100</id>
    </interactant>
    <interactant intactId="EBI-742651">
        <id>P35638</id>
        <label>DDIT3</label>
    </interactant>
    <organismsDiffer>false</organismsDiffer>
    <experiments>11</experiments>
</comment>
<comment type="interaction">
    <interactant intactId="EBI-852851">
        <id>P01100</id>
    </interactant>
    <interactant intactId="EBI-2340132">
        <id>Q9UI10</id>
        <label>EIF2B4</label>
    </interactant>
    <organismsDiffer>false</organismsDiffer>
    <experiments>3</experiments>
</comment>
<comment type="interaction">
    <interactant intactId="EBI-852851">
        <id>P01100</id>
    </interactant>
    <interactant intactId="EBI-744099">
        <id>Q9H0I2</id>
        <label>ENKD1</label>
    </interactant>
    <organismsDiffer>false</organismsDiffer>
    <experiments>3</experiments>
</comment>
<comment type="interaction">
    <interactant intactId="EBI-852851">
        <id>P01100</id>
    </interactant>
    <interactant intactId="EBI-852851">
        <id>P01100</id>
        <label>FOS</label>
    </interactant>
    <organismsDiffer>false</organismsDiffer>
    <experiments>2</experiments>
</comment>
<comment type="interaction">
    <interactant intactId="EBI-852851">
        <id>P01100</id>
    </interactant>
    <interactant intactId="EBI-746674">
        <id>Q9HC44</id>
        <label>GPBP1L1</label>
    </interactant>
    <organismsDiffer>false</organismsDiffer>
    <experiments>3</experiments>
</comment>
<comment type="interaction">
    <interactant intactId="EBI-852851">
        <id>P01100</id>
    </interactant>
    <interactant intactId="EBI-12353035">
        <id>Q13322-4</id>
        <label>GRB10</label>
    </interactant>
    <organismsDiffer>false</organismsDiffer>
    <experiments>3</experiments>
</comment>
<comment type="interaction">
    <interactant intactId="EBI-852851">
        <id>P01100</id>
    </interactant>
    <interactant intactId="EBI-712105">
        <id>Q13352</id>
        <label>ITGB3BP</label>
    </interactant>
    <organismsDiffer>false</organismsDiffer>
    <experiments>3</experiments>
</comment>
<comment type="interaction">
    <interactant intactId="EBI-852851">
        <id>P01100</id>
    </interactant>
    <interactant intactId="EBI-10311936">
        <id>Q9NQC1-2</id>
        <label>JADE2</label>
    </interactant>
    <organismsDiffer>false</organismsDiffer>
    <experiments>3</experiments>
</comment>
<comment type="interaction">
    <interactant intactId="EBI-852851">
        <id>P01100</id>
    </interactant>
    <interactant intactId="EBI-852823">
        <id>P05412</id>
        <label>JUN</label>
    </interactant>
    <organismsDiffer>false</organismsDiffer>
    <experiments>43</experiments>
</comment>
<comment type="interaction">
    <interactant intactId="EBI-852851">
        <id>P01100</id>
    </interactant>
    <interactant intactId="EBI-748062">
        <id>P17275</id>
        <label>JUNB</label>
    </interactant>
    <organismsDiffer>false</organismsDiffer>
    <experiments>14</experiments>
</comment>
<comment type="interaction">
    <interactant intactId="EBI-852851">
        <id>P01100</id>
    </interactant>
    <interactant intactId="EBI-2682803">
        <id>P17535</id>
        <label>JUND</label>
    </interactant>
    <organismsDiffer>false</organismsDiffer>
    <experiments>14</experiments>
</comment>
<comment type="interaction">
    <interactant intactId="EBI-852851">
        <id>P01100</id>
    </interactant>
    <interactant intactId="EBI-2796400">
        <id>Q9UIH9</id>
        <label>KLF15</label>
    </interactant>
    <organismsDiffer>false</organismsDiffer>
    <experiments>3</experiments>
</comment>
<comment type="interaction">
    <interactant intactId="EBI-852851">
        <id>P01100</id>
    </interactant>
    <interactant intactId="EBI-1048945">
        <id>Q3LI72</id>
        <label>KRTAP19-5</label>
    </interactant>
    <organismsDiffer>false</organismsDiffer>
    <experiments>3</experiments>
</comment>
<comment type="interaction">
    <interactant intactId="EBI-852851">
        <id>P01100</id>
    </interactant>
    <interactant intactId="EBI-5278370">
        <id>Q14693</id>
        <label>LPIN1</label>
    </interactant>
    <organismsDiffer>false</organismsDiffer>
    <experiments>3</experiments>
</comment>
<comment type="interaction">
    <interactant intactId="EBI-852851">
        <id>P01100</id>
    </interactant>
    <interactant intactId="EBI-3649340">
        <id>Q9Y5Q3</id>
        <label>MAFB</label>
    </interactant>
    <organismsDiffer>false</organismsDiffer>
    <experiments>2</experiments>
</comment>
<comment type="interaction">
    <interactant intactId="EBI-852851">
        <id>P01100</id>
    </interactant>
    <interactant intactId="EBI-1384862">
        <id>Q03112</id>
        <label>MECOM</label>
    </interactant>
    <organismsDiffer>false</organismsDiffer>
    <experiments>4</experiments>
</comment>
<comment type="interaction">
    <interactant intactId="EBI-852851">
        <id>P01100</id>
    </interactant>
    <interactant intactId="EBI-960794">
        <id>Q14994</id>
        <label>NR1I3</label>
    </interactant>
    <organismsDiffer>false</organismsDiffer>
    <experiments>3</experiments>
</comment>
<comment type="interaction">
    <interactant intactId="EBI-852851">
        <id>P01100</id>
    </interactant>
    <interactant intactId="EBI-2116585">
        <id>P42336</id>
        <label>PIK3CA</label>
    </interactant>
    <organismsDiffer>false</organismsDiffer>
    <experiments>3</experiments>
</comment>
<comment type="interaction">
    <interactant intactId="EBI-852851">
        <id>P01100</id>
    </interactant>
    <interactant intactId="EBI-9090282">
        <id>P27986-2</id>
        <label>PIK3R1</label>
    </interactant>
    <organismsDiffer>false</organismsDiffer>
    <experiments>3</experiments>
</comment>
<comment type="interaction">
    <interactant intactId="EBI-852851">
        <id>P01100</id>
    </interactant>
    <interactant intactId="EBI-714158">
        <id>Q13526</id>
        <label>PIN1</label>
    </interactant>
    <organismsDiffer>false</organismsDiffer>
    <experiments>3</experiments>
</comment>
<comment type="interaction">
    <interactant intactId="EBI-852851">
        <id>P01100</id>
    </interactant>
    <interactant intactId="EBI-351726">
        <id>O14974</id>
        <label>PPP1R12A</label>
    </interactant>
    <organismsDiffer>false</organismsDiffer>
    <experiments>2</experiments>
</comment>
<comment type="interaction">
    <interactant intactId="EBI-852851">
        <id>P01100</id>
    </interactant>
    <interactant intactId="EBI-351098">
        <id>O14744</id>
        <label>PRMT5</label>
    </interactant>
    <organismsDiffer>false</organismsDiffer>
    <experiments>3</experiments>
</comment>
<comment type="interaction">
    <interactant intactId="EBI-852851">
        <id>P01100</id>
    </interactant>
    <interactant intactId="EBI-722234">
        <id>Q15907</id>
        <label>RAB11B</label>
    </interactant>
    <organismsDiffer>false</organismsDiffer>
    <experiments>3</experiments>
</comment>
<comment type="interaction">
    <interactant intactId="EBI-852851">
        <id>P01100</id>
    </interactant>
    <interactant intactId="EBI-25856809">
        <id>Q9BWF3-2</id>
        <label>RBM4</label>
    </interactant>
    <organismsDiffer>false</organismsDiffer>
    <experiments>3</experiments>
</comment>
<comment type="interaction">
    <interactant intactId="EBI-852851">
        <id>P01100</id>
    </interactant>
    <interactant intactId="EBI-7825200">
        <id>Q96CM3</id>
        <label>RPUSD4</label>
    </interactant>
    <organismsDiffer>false</organismsDiffer>
    <experiments>4</experiments>
</comment>
<comment type="interaction">
    <interactant intactId="EBI-852851">
        <id>P01100</id>
    </interactant>
    <interactant intactId="EBI-7797649">
        <id>P11684</id>
        <label>SCGB1A1</label>
    </interactant>
    <organismsDiffer>false</organismsDiffer>
    <experiments>3</experiments>
</comment>
<comment type="interaction">
    <interactant intactId="EBI-852851">
        <id>P01100</id>
    </interactant>
    <interactant intactId="EBI-6983382">
        <id>O60880</id>
        <label>SH2D1A</label>
    </interactant>
    <organismsDiffer>false</organismsDiffer>
    <experiments>3</experiments>
</comment>
<comment type="interaction">
    <interactant intactId="EBI-852851">
        <id>P01100</id>
    </interactant>
    <interactant intactId="EBI-3923013">
        <id>O14796</id>
        <label>SH2D1B</label>
    </interactant>
    <organismsDiffer>false</organismsDiffer>
    <experiments>3</experiments>
</comment>
<comment type="interaction">
    <interactant intactId="EBI-852851">
        <id>P01100</id>
    </interactant>
    <interactant intactId="EBI-1268284">
        <id>Q9P1W8</id>
        <label>SIRPG</label>
    </interactant>
    <organismsDiffer>false</organismsDiffer>
    <experiments>3</experiments>
</comment>
<comment type="interaction">
    <interactant intactId="EBI-852851">
        <id>P01100</id>
    </interactant>
    <interactant intactId="EBI-1057697">
        <id>P42224</id>
        <label>STAT1</label>
    </interactant>
    <organismsDiffer>false</organismsDiffer>
    <experiments>6</experiments>
</comment>
<comment type="interaction">
    <interactant intactId="EBI-852851">
        <id>P01100</id>
    </interactant>
    <interactant intactId="EBI-749995">
        <id>P56279</id>
        <label>TCL1A</label>
    </interactant>
    <organismsDiffer>false</organismsDiffer>
    <experiments>4</experiments>
</comment>
<comment type="interaction">
    <interactant intactId="EBI-852851">
        <id>P01100</id>
    </interactant>
    <interactant intactId="EBI-752030">
        <id>Q96A09</id>
        <label>TENT5B</label>
    </interactant>
    <organismsDiffer>false</organismsDiffer>
    <experiments>3</experiments>
</comment>
<comment type="interaction">
    <interactant intactId="EBI-852851">
        <id>P01100</id>
    </interactant>
    <interactant intactId="EBI-21757569">
        <id>Q8NFB2</id>
        <label>TMEM185A</label>
    </interactant>
    <organismsDiffer>false</organismsDiffer>
    <experiments>3</experiments>
</comment>
<comment type="interaction">
    <interactant intactId="EBI-852851">
        <id>P01100</id>
    </interactant>
    <interactant intactId="EBI-2505861">
        <id>Q13829</id>
        <label>TNFAIP1</label>
    </interactant>
    <organismsDiffer>false</organismsDiffer>
    <experiments>3</experiments>
</comment>
<comment type="interaction">
    <interactant intactId="EBI-852851">
        <id>P01100</id>
    </interactant>
    <interactant intactId="EBI-1032551">
        <id>Q9BZM4</id>
        <label>ULBP3</label>
    </interactant>
    <organismsDiffer>false</organismsDiffer>
    <experiments>3</experiments>
</comment>
<comment type="interaction">
    <interactant intactId="EBI-852851">
        <id>P01100</id>
    </interactant>
    <interactant intactId="EBI-25857007">
        <id>Q6ZMY6-2</id>
        <label>WDR88</label>
    </interactant>
    <organismsDiffer>false</organismsDiffer>
    <experiments>3</experiments>
</comment>
<comment type="interaction">
    <interactant intactId="EBI-852851">
        <id>P01100</id>
    </interactant>
    <interactant intactId="EBI-2687350">
        <id>P52736</id>
        <label>ZNF133</label>
    </interactant>
    <organismsDiffer>false</organismsDiffer>
    <experiments>4</experiments>
</comment>
<comment type="interaction">
    <interactant intactId="EBI-852851">
        <id>P01100</id>
    </interactant>
    <interactant intactId="EBI-749023">
        <id>Q9UNY5</id>
        <label>ZNF232</label>
    </interactant>
    <organismsDiffer>false</organismsDiffer>
    <experiments>3</experiments>
</comment>
<comment type="interaction">
    <interactant intactId="EBI-852851">
        <id>P01100</id>
    </interactant>
    <interactant intactId="EBI-1054417">
        <id>Q9BRT8</id>
        <label>ZNG1A</label>
    </interactant>
    <organismsDiffer>false</organismsDiffer>
    <experiments>3</experiments>
</comment>
<comment type="interaction">
    <interactant intactId="EBI-852851">
        <id>P01100</id>
    </interactant>
    <interactant intactId="EBI-1809712">
        <id>P56671</id>
        <label>Maz</label>
    </interactant>
    <organismsDiffer>true</organismsDiffer>
    <experiments>2</experiments>
</comment>
<comment type="subcellular location">
    <subcellularLocation>
        <location>Nucleus</location>
    </subcellularLocation>
    <subcellularLocation>
        <location>Endoplasmic reticulum</location>
    </subcellularLocation>
    <subcellularLocation>
        <location>Cytoplasm</location>
        <location>Cytosol</location>
    </subcellularLocation>
    <text>In quiescent cells, present in very small amounts in the cytosol. Following induction of cell growth, first localizes to the endoplasmic reticulum and only later to the nucleus. Localization at the endoplasmic reticulum requires dephosphorylation at Tyr-10 and Tyr-30.</text>
</comment>
<comment type="alternative products">
    <event type="alternative splicing"/>
    <isoform>
        <id>P01100-1</id>
        <name>1</name>
        <sequence type="displayed"/>
    </isoform>
    <isoform>
        <id>P01100-2</id>
        <name>2</name>
        <sequence type="described" ref="VSP_055560"/>
    </isoform>
    <isoform>
        <id>P01100-3</id>
        <name>3</name>
        <sequence type="described" ref="VSP_055561"/>
    </isoform>
</comment>
<comment type="developmental stage">
    <text evidence="8">Expressed at very low levels in quiescent cells. When cells are stimulated to reenter growth, they undergo 2 waves of expression, the first one peaks 7.5 minutes following FBS induction. At this stage, the protein is localized endoplasmic reticulum. The second wave of expression occurs at about 20 minutes after induction and peaks at 1 hour. At this stage, the protein becomes nuclear.</text>
</comment>
<comment type="PTM">
    <text evidence="1">Phosphorylated in the C-terminal upon stimulation by nerve growth factor (NGF) and epidermal growth factor (EGF). Phosphorylated, in vitro, by MAPK and RSK1. Phosphorylation on both Ser-362 and Ser-374 by MAPK1/2 and RSK1/2 leads to protein stabilization with phosphorylation on Ser-374 being the major site for protein stabilization on NGF stimulation. Phosphorylation on Ser-362 and Ser-374 primes further phosphorylations on Thr-325 and Thr-331 through promoting docking of MAPK to the DEF domain. Phosphorylation on Thr-232, induced by HA-RAS, activates the transcriptional activity and antagonizes sumoylation. Phosphorylation on Ser-362 by RSK2 in osteoblasts contributes to osteoblast transformation (By similarity).</text>
</comment>
<comment type="PTM">
    <text evidence="7 9">Constitutively sumoylated with SUMO1, SUMO2 and SUMO3. Desumoylated by SENP2. Sumoylation requires heterodimerization with JUN and is enhanced by mitogen stimulation. Sumoylation inhibits the AP-1 transcriptional activity and is, itself, inhibited by Ras-activated phosphorylation on Thr-232.</text>
</comment>
<comment type="PTM">
    <text evidence="8 10">In quiescent cells, the small amount of FOS present is phosphorylated at Tyr-10 and Tyr-30 by SRC. This Tyr-phosphorylated form is cytosolic. In growing cells, dephosphorylated by PTPN2. Dephosphorylation leads to the association with endoplasmic reticulum membranes and activation of phospholipid synthesis.</text>
</comment>
<comment type="similarity">
    <text evidence="14">Belongs to the bZIP family. Fos subfamily.</text>
</comment>
<name>FOS_HUMAN</name>
<dbReference type="EMBL" id="V01512">
    <property type="protein sequence ID" value="CAA24756.1"/>
    <property type="molecule type" value="Genomic_DNA"/>
</dbReference>
<dbReference type="EMBL" id="K00650">
    <property type="protein sequence ID" value="AAA52471.1"/>
    <property type="molecule type" value="Genomic_DNA"/>
</dbReference>
<dbReference type="EMBL" id="AY212879">
    <property type="protein sequence ID" value="AAO21129.1"/>
    <property type="molecule type" value="Genomic_DNA"/>
</dbReference>
<dbReference type="EMBL" id="AK097379">
    <property type="protein sequence ID" value="BAG53458.1"/>
    <property type="molecule type" value="mRNA"/>
</dbReference>
<dbReference type="EMBL" id="AK290907">
    <property type="protein sequence ID" value="BAF83596.1"/>
    <property type="molecule type" value="mRNA"/>
</dbReference>
<dbReference type="EMBL" id="AK298659">
    <property type="protein sequence ID" value="BAG60827.1"/>
    <property type="molecule type" value="mRNA"/>
</dbReference>
<dbReference type="EMBL" id="AF111167">
    <property type="protein sequence ID" value="AAC98315.1"/>
    <property type="molecule type" value="Genomic_DNA"/>
</dbReference>
<dbReference type="EMBL" id="CH471061">
    <property type="protein sequence ID" value="EAW81229.1"/>
    <property type="molecule type" value="Genomic_DNA"/>
</dbReference>
<dbReference type="EMBL" id="BC004490">
    <property type="protein sequence ID" value="AAH04490.1"/>
    <property type="molecule type" value="mRNA"/>
</dbReference>
<dbReference type="EMBL" id="S65138">
    <property type="protein sequence ID" value="AAB20306.1"/>
    <property type="molecule type" value="mRNA"/>
</dbReference>
<dbReference type="CCDS" id="CCDS9841.1">
    <molecule id="P01100-1"/>
</dbReference>
<dbReference type="PIR" id="A01342">
    <property type="entry name" value="TVHUF1"/>
</dbReference>
<dbReference type="PIR" id="E34223">
    <property type="entry name" value="E34223"/>
</dbReference>
<dbReference type="RefSeq" id="NP_005243.1">
    <molecule id="P01100-1"/>
    <property type="nucleotide sequence ID" value="NM_005252.4"/>
</dbReference>
<dbReference type="PDB" id="1A02">
    <property type="method" value="X-ray"/>
    <property type="resolution" value="2.70 A"/>
    <property type="chains" value="F=138-193"/>
</dbReference>
<dbReference type="PDB" id="1FOS">
    <property type="method" value="X-ray"/>
    <property type="resolution" value="3.05 A"/>
    <property type="chains" value="E/G=139-200"/>
</dbReference>
<dbReference type="PDB" id="1S9K">
    <property type="method" value="X-ray"/>
    <property type="resolution" value="3.10 A"/>
    <property type="chains" value="D=140-192"/>
</dbReference>
<dbReference type="PDBsum" id="1A02"/>
<dbReference type="PDBsum" id="1FOS"/>
<dbReference type="PDBsum" id="1S9K"/>
<dbReference type="SMR" id="P01100"/>
<dbReference type="BioGRID" id="108636">
    <property type="interactions" value="267"/>
</dbReference>
<dbReference type="ComplexPortal" id="CPX-2491">
    <property type="entry name" value="bZIP transcription factor complex, BACH1-FOS"/>
</dbReference>
<dbReference type="ComplexPortal" id="CPX-480">
    <property type="entry name" value="AP-1 transcription factor complex FOS-JUN-NFATC2"/>
</dbReference>
<dbReference type="ComplexPortal" id="CPX-486">
    <property type="entry name" value="bZIP transcription factor complex, FOS-JUN"/>
</dbReference>
<dbReference type="ComplexPortal" id="CPX-6416">
    <property type="entry name" value="bZIP transcription factor complex, ATF2-FOS"/>
</dbReference>
<dbReference type="ComplexPortal" id="CPX-6477">
    <property type="entry name" value="bZIP transcription factor complex, ATF3-FOS"/>
</dbReference>
<dbReference type="ComplexPortal" id="CPX-6564">
    <property type="entry name" value="bZIP transcription factor complex, ATF4-FOS"/>
</dbReference>
<dbReference type="ComplexPortal" id="CPX-6783">
    <property type="entry name" value="bZIP transcription factor complex, ATF7-FOS"/>
</dbReference>
<dbReference type="CORUM" id="P01100"/>
<dbReference type="DIP" id="DIP-1047N"/>
<dbReference type="ELM" id="P01100"/>
<dbReference type="FunCoup" id="P01100">
    <property type="interactions" value="4133"/>
</dbReference>
<dbReference type="IntAct" id="P01100">
    <property type="interactions" value="285"/>
</dbReference>
<dbReference type="MINT" id="P01100"/>
<dbReference type="STRING" id="9606.ENSP00000306245"/>
<dbReference type="BindingDB" id="P01100"/>
<dbReference type="ChEMBL" id="CHEMBL5029"/>
<dbReference type="DrugBank" id="DB08813">
    <property type="generic name" value="Nadroparin"/>
</dbReference>
<dbReference type="DrugBank" id="DB08804">
    <property type="generic name" value="Nandrolone decanoate"/>
</dbReference>
<dbReference type="DrugBank" id="DB00852">
    <property type="generic name" value="Pseudoephedrine"/>
</dbReference>
<dbReference type="GlyCosmos" id="P01100">
    <property type="glycosylation" value="8 sites, 2 glycans"/>
</dbReference>
<dbReference type="GlyGen" id="P01100">
    <property type="glycosylation" value="8 sites, 2 O-linked glycans (8 sites)"/>
</dbReference>
<dbReference type="iPTMnet" id="P01100"/>
<dbReference type="PhosphoSitePlus" id="P01100"/>
<dbReference type="BioMuta" id="FOS"/>
<dbReference type="DMDM" id="120470"/>
<dbReference type="CPTAC" id="CPTAC-5781"/>
<dbReference type="CPTAC" id="CPTAC-5782"/>
<dbReference type="CPTAC" id="CPTAC-5783"/>
<dbReference type="CPTAC" id="non-CPTAC-5397"/>
<dbReference type="CPTAC" id="non-CPTAC-5398"/>
<dbReference type="CPTAC" id="non-CPTAC-5551"/>
<dbReference type="CPTAC" id="non-CPTAC-5552"/>
<dbReference type="CPTAC" id="non-CPTAC-5553"/>
<dbReference type="jPOST" id="P01100"/>
<dbReference type="MassIVE" id="P01100"/>
<dbReference type="PaxDb" id="9606-ENSP00000306245"/>
<dbReference type="PeptideAtlas" id="P01100"/>
<dbReference type="ProteomicsDB" id="1860"/>
<dbReference type="ProteomicsDB" id="4848"/>
<dbReference type="ProteomicsDB" id="51317">
    <molecule id="P01100-1"/>
</dbReference>
<dbReference type="ABCD" id="P01100">
    <property type="antibodies" value="13 sequenced antibodies"/>
</dbReference>
<dbReference type="Antibodypedia" id="4375">
    <property type="antibodies" value="1928 antibodies from 50 providers"/>
</dbReference>
<dbReference type="CPTC" id="P01100">
    <property type="antibodies" value="4 antibodies"/>
</dbReference>
<dbReference type="DNASU" id="2353"/>
<dbReference type="Ensembl" id="ENST00000303562.9">
    <molecule id="P01100-1"/>
    <property type="protein sequence ID" value="ENSP00000306245.4"/>
    <property type="gene ID" value="ENSG00000170345.11"/>
</dbReference>
<dbReference type="Ensembl" id="ENST00000535987.6">
    <molecule id="P01100-3"/>
    <property type="protein sequence ID" value="ENSP00000442268.1"/>
    <property type="gene ID" value="ENSG00000170345.11"/>
</dbReference>
<dbReference type="Ensembl" id="ENST00000555686.1">
    <molecule id="P01100-2"/>
    <property type="protein sequence ID" value="ENSP00000452590.1"/>
    <property type="gene ID" value="ENSG00000170345.11"/>
</dbReference>
<dbReference type="GeneID" id="2353"/>
<dbReference type="KEGG" id="hsa:2353"/>
<dbReference type="MANE-Select" id="ENST00000303562.9">
    <property type="protein sequence ID" value="ENSP00000306245.4"/>
    <property type="RefSeq nucleotide sequence ID" value="NM_005252.4"/>
    <property type="RefSeq protein sequence ID" value="NP_005243.1"/>
</dbReference>
<dbReference type="UCSC" id="uc010asi.4">
    <molecule id="P01100-1"/>
    <property type="organism name" value="human"/>
</dbReference>
<dbReference type="AGR" id="HGNC:3796"/>
<dbReference type="CTD" id="2353"/>
<dbReference type="DisGeNET" id="2353"/>
<dbReference type="GeneCards" id="FOS"/>
<dbReference type="HGNC" id="HGNC:3796">
    <property type="gene designation" value="FOS"/>
</dbReference>
<dbReference type="HPA" id="ENSG00000170345">
    <property type="expression patterns" value="Low tissue specificity"/>
</dbReference>
<dbReference type="MalaCards" id="FOS"/>
<dbReference type="MIM" id="164810">
    <property type="type" value="gene"/>
</dbReference>
<dbReference type="neXtProt" id="NX_P01100"/>
<dbReference type="OpenTargets" id="ENSG00000170345"/>
<dbReference type="Orphanet" id="528">
    <property type="disease" value="Congenital generalized lipodystrophy"/>
</dbReference>
<dbReference type="Orphanet" id="675396">
    <property type="disease" value="Epithelioid hemangioma"/>
</dbReference>
<dbReference type="PharmGKB" id="PA28212"/>
<dbReference type="VEuPathDB" id="HostDB:ENSG00000170345"/>
<dbReference type="eggNOG" id="KOG1414">
    <property type="taxonomic scope" value="Eukaryota"/>
</dbReference>
<dbReference type="GeneTree" id="ENSGT00940000159276"/>
<dbReference type="HOGENOM" id="CLU_049742_2_0_1"/>
<dbReference type="InParanoid" id="P01100"/>
<dbReference type="OMA" id="NRTHPYG"/>
<dbReference type="OrthoDB" id="5866312at2759"/>
<dbReference type="PAN-GO" id="P01100">
    <property type="GO annotations" value="4 GO annotations based on evolutionary models"/>
</dbReference>
<dbReference type="PhylomeDB" id="P01100"/>
<dbReference type="TreeFam" id="TF326301"/>
<dbReference type="PathwayCommons" id="P01100"/>
<dbReference type="Reactome" id="R-HSA-2559580">
    <property type="pathway name" value="Oxidative Stress Induced Senescence"/>
</dbReference>
<dbReference type="Reactome" id="R-HSA-2559582">
    <property type="pathway name" value="Senescence-Associated Secretory Phenotype (SASP)"/>
</dbReference>
<dbReference type="Reactome" id="R-HSA-2871796">
    <property type="pathway name" value="FCERI mediated MAPK activation"/>
</dbReference>
<dbReference type="Reactome" id="R-HSA-450341">
    <property type="pathway name" value="Activation of the AP-1 family of transcription factors"/>
</dbReference>
<dbReference type="Reactome" id="R-HSA-6785807">
    <property type="pathway name" value="Interleukin-4 and Interleukin-13 signaling"/>
</dbReference>
<dbReference type="Reactome" id="R-HSA-6796648">
    <property type="pathway name" value="TP53 Regulates Transcription of DNA Repair Genes"/>
</dbReference>
<dbReference type="Reactome" id="R-HSA-9018519">
    <property type="pathway name" value="Estrogen-dependent gene expression"/>
</dbReference>
<dbReference type="Reactome" id="R-HSA-9031628">
    <property type="pathway name" value="NGF-stimulated transcription"/>
</dbReference>
<dbReference type="Reactome" id="R-HSA-9634638">
    <property type="pathway name" value="Estrogen-dependent nuclear events downstream of ESR-membrane signaling"/>
</dbReference>
<dbReference type="Reactome" id="R-HSA-9768919">
    <property type="pathway name" value="NPAS4 regulates expression of target genes"/>
</dbReference>
<dbReference type="SignaLink" id="P01100"/>
<dbReference type="SIGNOR" id="P01100"/>
<dbReference type="BioGRID-ORCS" id="2353">
    <property type="hits" value="17 hits in 1182 CRISPR screens"/>
</dbReference>
<dbReference type="CD-CODE" id="1A18FFC4">
    <property type="entry name" value="Paraspeckle"/>
</dbReference>
<dbReference type="ChiTaRS" id="FOS">
    <property type="organism name" value="human"/>
</dbReference>
<dbReference type="EvolutionaryTrace" id="P01100"/>
<dbReference type="GeneWiki" id="C-Fos"/>
<dbReference type="GenomeRNAi" id="2353"/>
<dbReference type="Pharos" id="P01100">
    <property type="development level" value="Tbio"/>
</dbReference>
<dbReference type="PRO" id="PR:P01100"/>
<dbReference type="Proteomes" id="UP000005640">
    <property type="component" value="Chromosome 14"/>
</dbReference>
<dbReference type="RNAct" id="P01100">
    <property type="molecule type" value="protein"/>
</dbReference>
<dbReference type="Bgee" id="ENSG00000170345">
    <property type="expression patterns" value="Expressed in mucosa of stomach and 204 other cell types or tissues"/>
</dbReference>
<dbReference type="ExpressionAtlas" id="P01100">
    <property type="expression patterns" value="baseline and differential"/>
</dbReference>
<dbReference type="GO" id="GO:0000785">
    <property type="term" value="C:chromatin"/>
    <property type="evidence" value="ECO:0000247"/>
    <property type="project" value="NTNU_SB"/>
</dbReference>
<dbReference type="GO" id="GO:0005829">
    <property type="term" value="C:cytosol"/>
    <property type="evidence" value="ECO:0007669"/>
    <property type="project" value="UniProtKB-SubCell"/>
</dbReference>
<dbReference type="GO" id="GO:0005783">
    <property type="term" value="C:endoplasmic reticulum"/>
    <property type="evidence" value="ECO:0007669"/>
    <property type="project" value="UniProtKB-SubCell"/>
</dbReference>
<dbReference type="GO" id="GO:0016363">
    <property type="term" value="C:nuclear matrix"/>
    <property type="evidence" value="ECO:0007669"/>
    <property type="project" value="Ensembl"/>
</dbReference>
<dbReference type="GO" id="GO:0005654">
    <property type="term" value="C:nucleoplasm"/>
    <property type="evidence" value="ECO:0000314"/>
    <property type="project" value="HPA"/>
</dbReference>
<dbReference type="GO" id="GO:0005634">
    <property type="term" value="C:nucleus"/>
    <property type="evidence" value="ECO:0000314"/>
    <property type="project" value="BHF-UCL"/>
</dbReference>
<dbReference type="GO" id="GO:0032993">
    <property type="term" value="C:protein-DNA complex"/>
    <property type="evidence" value="ECO:0000315"/>
    <property type="project" value="CAFA"/>
</dbReference>
<dbReference type="GO" id="GO:0090575">
    <property type="term" value="C:RNA polymerase II transcription regulator complex"/>
    <property type="evidence" value="ECO:0000353"/>
    <property type="project" value="ComplexPortal"/>
</dbReference>
<dbReference type="GO" id="GO:0035976">
    <property type="term" value="C:transcription factor AP-1 complex"/>
    <property type="evidence" value="ECO:0000314"/>
    <property type="project" value="CAFA"/>
</dbReference>
<dbReference type="GO" id="GO:0001228">
    <property type="term" value="F:DNA-binding transcription activator activity, RNA polymerase II-specific"/>
    <property type="evidence" value="ECO:0000314"/>
    <property type="project" value="BHF-UCL"/>
</dbReference>
<dbReference type="GO" id="GO:0003700">
    <property type="term" value="F:DNA-binding transcription factor activity"/>
    <property type="evidence" value="ECO:0000314"/>
    <property type="project" value="BHF-UCL"/>
</dbReference>
<dbReference type="GO" id="GO:0000981">
    <property type="term" value="F:DNA-binding transcription factor activity, RNA polymerase II-specific"/>
    <property type="evidence" value="ECO:0000247"/>
    <property type="project" value="NTNU_SB"/>
</dbReference>
<dbReference type="GO" id="GO:0042802">
    <property type="term" value="F:identical protein binding"/>
    <property type="evidence" value="ECO:0000353"/>
    <property type="project" value="IntAct"/>
</dbReference>
<dbReference type="GO" id="GO:1990841">
    <property type="term" value="F:promoter-specific chromatin binding"/>
    <property type="evidence" value="ECO:0007669"/>
    <property type="project" value="Ensembl"/>
</dbReference>
<dbReference type="GO" id="GO:0044877">
    <property type="term" value="F:protein-containing complex binding"/>
    <property type="evidence" value="ECO:0007669"/>
    <property type="project" value="Ensembl"/>
</dbReference>
<dbReference type="GO" id="GO:0070412">
    <property type="term" value="F:R-SMAD binding"/>
    <property type="evidence" value="ECO:0000353"/>
    <property type="project" value="BHF-UCL"/>
</dbReference>
<dbReference type="GO" id="GO:0000978">
    <property type="term" value="F:RNA polymerase II cis-regulatory region sequence-specific DNA binding"/>
    <property type="evidence" value="ECO:0000314"/>
    <property type="project" value="BHF-UCL"/>
</dbReference>
<dbReference type="GO" id="GO:0000979">
    <property type="term" value="F:RNA polymerase II core promoter sequence-specific DNA binding"/>
    <property type="evidence" value="ECO:0000315"/>
    <property type="project" value="CAFA"/>
</dbReference>
<dbReference type="GO" id="GO:0061629">
    <property type="term" value="F:RNA polymerase II-specific DNA-binding transcription factor binding"/>
    <property type="evidence" value="ECO:0000353"/>
    <property type="project" value="CAFA"/>
</dbReference>
<dbReference type="GO" id="GO:1990837">
    <property type="term" value="F:sequence-specific double-stranded DNA binding"/>
    <property type="evidence" value="ECO:0000314"/>
    <property type="project" value="ARUK-UCL"/>
</dbReference>
<dbReference type="GO" id="GO:0000976">
    <property type="term" value="F:transcription cis-regulatory region binding"/>
    <property type="evidence" value="ECO:0000314"/>
    <property type="project" value="BHF-UCL"/>
</dbReference>
<dbReference type="GO" id="GO:0001221">
    <property type="term" value="F:transcription coregulator binding"/>
    <property type="evidence" value="ECO:0000353"/>
    <property type="project" value="ParkinsonsUK-UCL"/>
</dbReference>
<dbReference type="GO" id="GO:0071277">
    <property type="term" value="P:cellular response to calcium ion"/>
    <property type="evidence" value="ECO:0007669"/>
    <property type="project" value="Ensembl"/>
</dbReference>
<dbReference type="GO" id="GO:0071364">
    <property type="term" value="P:cellular response to epidermal growth factor stimulus"/>
    <property type="evidence" value="ECO:0007669"/>
    <property type="project" value="Ensembl"/>
</dbReference>
<dbReference type="GO" id="GO:0071456">
    <property type="term" value="P:cellular response to hypoxia"/>
    <property type="evidence" value="ECO:0007669"/>
    <property type="project" value="Ensembl"/>
</dbReference>
<dbReference type="GO" id="GO:0071374">
    <property type="term" value="P:cellular response to parathyroid hormone stimulus"/>
    <property type="evidence" value="ECO:0007669"/>
    <property type="project" value="Ensembl"/>
</dbReference>
<dbReference type="GO" id="GO:1904628">
    <property type="term" value="P:cellular response to phorbol 13-acetate 12-myristate"/>
    <property type="evidence" value="ECO:0007669"/>
    <property type="project" value="Ensembl"/>
</dbReference>
<dbReference type="GO" id="GO:1990646">
    <property type="term" value="P:cellular response to prolactin"/>
    <property type="evidence" value="ECO:0007669"/>
    <property type="project" value="Ensembl"/>
</dbReference>
<dbReference type="GO" id="GO:0034614">
    <property type="term" value="P:cellular response to reactive oxygen species"/>
    <property type="evidence" value="ECO:0000314"/>
    <property type="project" value="BHF-UCL"/>
</dbReference>
<dbReference type="GO" id="GO:0071356">
    <property type="term" value="P:cellular response to tumor necrosis factor"/>
    <property type="evidence" value="ECO:0007669"/>
    <property type="project" value="Ensembl"/>
</dbReference>
<dbReference type="GO" id="GO:0034224">
    <property type="term" value="P:cellular response to zinc ion starvation"/>
    <property type="evidence" value="ECO:0007669"/>
    <property type="project" value="Ensembl"/>
</dbReference>
<dbReference type="GO" id="GO:0021987">
    <property type="term" value="P:cerebral cortex development"/>
    <property type="evidence" value="ECO:0007669"/>
    <property type="project" value="Ensembl"/>
</dbReference>
<dbReference type="GO" id="GO:0001661">
    <property type="term" value="P:conditioned taste aversion"/>
    <property type="evidence" value="ECO:0007669"/>
    <property type="project" value="Ensembl"/>
</dbReference>
<dbReference type="GO" id="GO:0007565">
    <property type="term" value="P:female pregnancy"/>
    <property type="evidence" value="ECO:0007669"/>
    <property type="project" value="Ensembl"/>
</dbReference>
<dbReference type="GO" id="GO:0006954">
    <property type="term" value="P:inflammatory response"/>
    <property type="evidence" value="ECO:0000304"/>
    <property type="project" value="ProtInc"/>
</dbReference>
<dbReference type="GO" id="GO:0140467">
    <property type="term" value="P:integrated stress response signaling"/>
    <property type="evidence" value="ECO:0000303"/>
    <property type="project" value="ComplexPortal"/>
</dbReference>
<dbReference type="GO" id="GO:0072375">
    <property type="term" value="P:medium-term memory"/>
    <property type="evidence" value="ECO:0007669"/>
    <property type="project" value="Ensembl"/>
</dbReference>
<dbReference type="GO" id="GO:1903131">
    <property type="term" value="P:mononuclear cell differentiation"/>
    <property type="evidence" value="ECO:0007669"/>
    <property type="project" value="Ensembl"/>
</dbReference>
<dbReference type="GO" id="GO:0051450">
    <property type="term" value="P:myoblast proliferation"/>
    <property type="evidence" value="ECO:0007669"/>
    <property type="project" value="Ensembl"/>
</dbReference>
<dbReference type="GO" id="GO:0003407">
    <property type="term" value="P:neural retina development"/>
    <property type="evidence" value="ECO:0007669"/>
    <property type="project" value="Ensembl"/>
</dbReference>
<dbReference type="GO" id="GO:0030182">
    <property type="term" value="P:neuron differentiation"/>
    <property type="evidence" value="ECO:0007669"/>
    <property type="project" value="Ensembl"/>
</dbReference>
<dbReference type="GO" id="GO:0030316">
    <property type="term" value="P:osteoclast differentiation"/>
    <property type="evidence" value="ECO:0007669"/>
    <property type="project" value="Ensembl"/>
</dbReference>
<dbReference type="GO" id="GO:0045893">
    <property type="term" value="P:positive regulation of DNA-templated transcription"/>
    <property type="evidence" value="ECO:0000314"/>
    <property type="project" value="BHF-UCL"/>
</dbReference>
<dbReference type="GO" id="GO:1902895">
    <property type="term" value="P:positive regulation of miRNA transcription"/>
    <property type="evidence" value="ECO:0000314"/>
    <property type="project" value="BHF-UCL"/>
</dbReference>
<dbReference type="GO" id="GO:0045672">
    <property type="term" value="P:positive regulation of osteoclast differentiation"/>
    <property type="evidence" value="ECO:0007669"/>
    <property type="project" value="Ensembl"/>
</dbReference>
<dbReference type="GO" id="GO:0045944">
    <property type="term" value="P:positive regulation of transcription by RNA polymerase II"/>
    <property type="evidence" value="ECO:0000314"/>
    <property type="project" value="CAFA"/>
</dbReference>
<dbReference type="GO" id="GO:0006357">
    <property type="term" value="P:regulation of transcription by RNA polymerase II"/>
    <property type="evidence" value="ECO:0000314"/>
    <property type="project" value="ComplexPortal"/>
</dbReference>
<dbReference type="GO" id="GO:0014823">
    <property type="term" value="P:response to activity"/>
    <property type="evidence" value="ECO:0007669"/>
    <property type="project" value="Ensembl"/>
</dbReference>
<dbReference type="GO" id="GO:0051591">
    <property type="term" value="P:response to cAMP"/>
    <property type="evidence" value="ECO:0007669"/>
    <property type="project" value="Ensembl"/>
</dbReference>
<dbReference type="GO" id="GO:0051412">
    <property type="term" value="P:response to corticosterone"/>
    <property type="evidence" value="ECO:0007669"/>
    <property type="project" value="Ensembl"/>
</dbReference>
<dbReference type="GO" id="GO:0045471">
    <property type="term" value="P:response to ethanol"/>
    <property type="evidence" value="ECO:0007669"/>
    <property type="project" value="Ensembl"/>
</dbReference>
<dbReference type="GO" id="GO:0009629">
    <property type="term" value="P:response to gravity"/>
    <property type="evidence" value="ECO:0007669"/>
    <property type="project" value="Ensembl"/>
</dbReference>
<dbReference type="GO" id="GO:0035902">
    <property type="term" value="P:response to immobilization stress"/>
    <property type="evidence" value="ECO:0007669"/>
    <property type="project" value="Ensembl"/>
</dbReference>
<dbReference type="GO" id="GO:0032868">
    <property type="term" value="P:response to insulin"/>
    <property type="evidence" value="ECO:0007669"/>
    <property type="project" value="Ensembl"/>
</dbReference>
<dbReference type="GO" id="GO:0009416">
    <property type="term" value="P:response to light stimulus"/>
    <property type="evidence" value="ECO:0007669"/>
    <property type="project" value="Ensembl"/>
</dbReference>
<dbReference type="GO" id="GO:0032496">
    <property type="term" value="P:response to lipopolysaccharide"/>
    <property type="evidence" value="ECO:0007669"/>
    <property type="project" value="Ensembl"/>
</dbReference>
<dbReference type="GO" id="GO:0035994">
    <property type="term" value="P:response to muscle stretch"/>
    <property type="evidence" value="ECO:0007669"/>
    <property type="project" value="Ensembl"/>
</dbReference>
<dbReference type="GO" id="GO:0032570">
    <property type="term" value="P:response to progesterone"/>
    <property type="evidence" value="ECO:0007669"/>
    <property type="project" value="Ensembl"/>
</dbReference>
<dbReference type="GO" id="GO:0009636">
    <property type="term" value="P:response to toxic substance"/>
    <property type="evidence" value="ECO:0007669"/>
    <property type="project" value="Ensembl"/>
</dbReference>
<dbReference type="GO" id="GO:0009410">
    <property type="term" value="P:response to xenobiotic stimulus"/>
    <property type="evidence" value="ECO:0007669"/>
    <property type="project" value="Ensembl"/>
</dbReference>
<dbReference type="GO" id="GO:0035914">
    <property type="term" value="P:skeletal muscle cell differentiation"/>
    <property type="evidence" value="ECO:0007669"/>
    <property type="project" value="Ensembl"/>
</dbReference>
<dbReference type="GO" id="GO:0014856">
    <property type="term" value="P:skeletal muscle cell proliferation"/>
    <property type="evidence" value="ECO:0007669"/>
    <property type="project" value="Ensembl"/>
</dbReference>
<dbReference type="GO" id="GO:0060395">
    <property type="term" value="P:SMAD protein signal transduction"/>
    <property type="evidence" value="ECO:0000314"/>
    <property type="project" value="BHF-UCL"/>
</dbReference>
<dbReference type="GO" id="GO:0006366">
    <property type="term" value="P:transcription by RNA polymerase II"/>
    <property type="evidence" value="ECO:0000304"/>
    <property type="project" value="ProtInc"/>
</dbReference>
<dbReference type="GO" id="GO:0007179">
    <property type="term" value="P:transforming growth factor beta receptor signaling pathway"/>
    <property type="evidence" value="ECO:0000314"/>
    <property type="project" value="BHF-UCL"/>
</dbReference>
<dbReference type="CDD" id="cd14721">
    <property type="entry name" value="bZIP_Fos"/>
    <property type="match status" value="1"/>
</dbReference>
<dbReference type="DisProt" id="DP00078"/>
<dbReference type="FunFam" id="1.20.5.170:FF:000006">
    <property type="entry name" value="fos-related antigen 2 isoform X1"/>
    <property type="match status" value="1"/>
</dbReference>
<dbReference type="Gene3D" id="1.20.5.170">
    <property type="match status" value="1"/>
</dbReference>
<dbReference type="IDEAL" id="IID00436"/>
<dbReference type="InterPro" id="IPR000837">
    <property type="entry name" value="AP-1"/>
</dbReference>
<dbReference type="InterPro" id="IPR004827">
    <property type="entry name" value="bZIP"/>
</dbReference>
<dbReference type="InterPro" id="IPR046347">
    <property type="entry name" value="bZIP_sf"/>
</dbReference>
<dbReference type="PANTHER" id="PTHR23351">
    <property type="entry name" value="FOS TRANSCRIPTION FACTOR-RELATED"/>
    <property type="match status" value="1"/>
</dbReference>
<dbReference type="PANTHER" id="PTHR23351:SF4">
    <property type="entry name" value="PROTEIN C-FOS"/>
    <property type="match status" value="1"/>
</dbReference>
<dbReference type="Pfam" id="PF00170">
    <property type="entry name" value="bZIP_1"/>
    <property type="match status" value="1"/>
</dbReference>
<dbReference type="PRINTS" id="PR00042">
    <property type="entry name" value="LEUZIPPRFOS"/>
</dbReference>
<dbReference type="SMART" id="SM00338">
    <property type="entry name" value="BRLZ"/>
    <property type="match status" value="1"/>
</dbReference>
<dbReference type="SUPFAM" id="SSF57959">
    <property type="entry name" value="Leucine zipper domain"/>
    <property type="match status" value="1"/>
</dbReference>
<dbReference type="PROSITE" id="PS50217">
    <property type="entry name" value="BZIP"/>
    <property type="match status" value="1"/>
</dbReference>
<dbReference type="PROSITE" id="PS00036">
    <property type="entry name" value="BZIP_BASIC"/>
    <property type="match status" value="1"/>
</dbReference>
<keyword id="KW-0002">3D-structure</keyword>
<keyword id="KW-0025">Alternative splicing</keyword>
<keyword id="KW-0963">Cytoplasm</keyword>
<keyword id="KW-0238">DNA-binding</keyword>
<keyword id="KW-0256">Endoplasmic reticulum</keyword>
<keyword id="KW-1017">Isopeptide bond</keyword>
<keyword id="KW-0539">Nucleus</keyword>
<keyword id="KW-0597">Phosphoprotein</keyword>
<keyword id="KW-1267">Proteomics identification</keyword>
<keyword id="KW-0656">Proto-oncogene</keyword>
<keyword id="KW-1185">Reference proteome</keyword>
<keyword id="KW-0832">Ubl conjugation</keyword>
<evidence type="ECO:0000250" key="1"/>
<evidence type="ECO:0000250" key="2">
    <source>
        <dbReference type="UniProtKB" id="P01101"/>
    </source>
</evidence>
<evidence type="ECO:0000250" key="3">
    <source>
        <dbReference type="UniProtKB" id="P12841"/>
    </source>
</evidence>
<evidence type="ECO:0000255" key="4">
    <source>
        <dbReference type="PROSITE-ProRule" id="PRU00978"/>
    </source>
</evidence>
<evidence type="ECO:0000256" key="5">
    <source>
        <dbReference type="SAM" id="MobiDB-lite"/>
    </source>
</evidence>
<evidence type="ECO:0000269" key="6">
    <source>
    </source>
</evidence>
<evidence type="ECO:0000269" key="7">
    <source>
    </source>
</evidence>
<evidence type="ECO:0000269" key="8">
    <source>
    </source>
</evidence>
<evidence type="ECO:0000269" key="9">
    <source>
    </source>
</evidence>
<evidence type="ECO:0000269" key="10">
    <source>
    </source>
</evidence>
<evidence type="ECO:0000269" key="11">
    <source>
    </source>
</evidence>
<evidence type="ECO:0000269" key="12">
    <source>
    </source>
</evidence>
<evidence type="ECO:0000303" key="13">
    <source>
    </source>
</evidence>
<evidence type="ECO:0000305" key="14"/>
<evidence type="ECO:0000312" key="15">
    <source>
        <dbReference type="HGNC" id="HGNC:3796"/>
    </source>
</evidence>
<evidence type="ECO:0007744" key="16">
    <source>
    </source>
</evidence>
<evidence type="ECO:0007744" key="17">
    <source>
    </source>
</evidence>
<evidence type="ECO:0007744" key="18">
    <source>
    </source>
</evidence>
<evidence type="ECO:0007829" key="19">
    <source>
        <dbReference type="PDB" id="1A02"/>
    </source>
</evidence>
<protein>
    <recommendedName>
        <fullName evidence="14">Protein c-Fos</fullName>
    </recommendedName>
    <alternativeName>
        <fullName>Cellular oncogene fos</fullName>
    </alternativeName>
    <alternativeName>
        <fullName evidence="15">Fos proto-oncogene, AP-1 transcription factor subunit</fullName>
    </alternativeName>
    <alternativeName>
        <fullName>G0/G1 switch regulatory protein 7</fullName>
    </alternativeName>
    <alternativeName>
        <fullName>Proto-oncogene c-Fos</fullName>
    </alternativeName>
    <alternativeName>
        <fullName evidence="14">Transcription factor AP-1 subunit c-Fos</fullName>
    </alternativeName>
</protein>